<dbReference type="EC" id="3.6.1.9" evidence="1"/>
<dbReference type="EMBL" id="CP000312">
    <property type="protein sequence ID" value="ABG87703.1"/>
    <property type="molecule type" value="Genomic_DNA"/>
</dbReference>
<dbReference type="RefSeq" id="WP_011592948.1">
    <property type="nucleotide sequence ID" value="NC_008262.1"/>
</dbReference>
<dbReference type="SMR" id="Q0SR36"/>
<dbReference type="KEGG" id="cpr:CPR_2112"/>
<dbReference type="BioCyc" id="CPER289380:GI76-2123-MONOMER"/>
<dbReference type="Proteomes" id="UP000001824">
    <property type="component" value="Chromosome"/>
</dbReference>
<dbReference type="GO" id="GO:0005737">
    <property type="term" value="C:cytoplasm"/>
    <property type="evidence" value="ECO:0007669"/>
    <property type="project" value="UniProtKB-SubCell"/>
</dbReference>
<dbReference type="GO" id="GO:0036218">
    <property type="term" value="F:dTTP diphosphatase activity"/>
    <property type="evidence" value="ECO:0007669"/>
    <property type="project" value="RHEA"/>
</dbReference>
<dbReference type="GO" id="GO:0036221">
    <property type="term" value="F:UTP diphosphatase activity"/>
    <property type="evidence" value="ECO:0007669"/>
    <property type="project" value="RHEA"/>
</dbReference>
<dbReference type="GO" id="GO:0009117">
    <property type="term" value="P:nucleotide metabolic process"/>
    <property type="evidence" value="ECO:0007669"/>
    <property type="project" value="UniProtKB-KW"/>
</dbReference>
<dbReference type="CDD" id="cd00555">
    <property type="entry name" value="Maf"/>
    <property type="match status" value="1"/>
</dbReference>
<dbReference type="FunFam" id="3.90.950.10:FF:000005">
    <property type="entry name" value="7-methyl-GTP pyrophosphatase"/>
    <property type="match status" value="1"/>
</dbReference>
<dbReference type="Gene3D" id="3.90.950.10">
    <property type="match status" value="1"/>
</dbReference>
<dbReference type="HAMAP" id="MF_00528">
    <property type="entry name" value="Maf"/>
    <property type="match status" value="1"/>
</dbReference>
<dbReference type="InterPro" id="IPR029001">
    <property type="entry name" value="ITPase-like_fam"/>
</dbReference>
<dbReference type="InterPro" id="IPR003697">
    <property type="entry name" value="Maf-like"/>
</dbReference>
<dbReference type="NCBIfam" id="TIGR00172">
    <property type="entry name" value="maf"/>
    <property type="match status" value="1"/>
</dbReference>
<dbReference type="NCBIfam" id="NF000867">
    <property type="entry name" value="PRK00078.1"/>
    <property type="match status" value="1"/>
</dbReference>
<dbReference type="PANTHER" id="PTHR43213">
    <property type="entry name" value="BIFUNCTIONAL DTTP/UTP PYROPHOSPHATASE/METHYLTRANSFERASE PROTEIN-RELATED"/>
    <property type="match status" value="1"/>
</dbReference>
<dbReference type="PANTHER" id="PTHR43213:SF5">
    <property type="entry name" value="BIFUNCTIONAL DTTP_UTP PYROPHOSPHATASE_METHYLTRANSFERASE PROTEIN-RELATED"/>
    <property type="match status" value="1"/>
</dbReference>
<dbReference type="Pfam" id="PF02545">
    <property type="entry name" value="Maf"/>
    <property type="match status" value="1"/>
</dbReference>
<dbReference type="PIRSF" id="PIRSF006305">
    <property type="entry name" value="Maf"/>
    <property type="match status" value="1"/>
</dbReference>
<dbReference type="SUPFAM" id="SSF52972">
    <property type="entry name" value="ITPase-like"/>
    <property type="match status" value="1"/>
</dbReference>
<keyword id="KW-0963">Cytoplasm</keyword>
<keyword id="KW-0378">Hydrolase</keyword>
<keyword id="KW-0546">Nucleotide metabolism</keyword>
<proteinExistence type="inferred from homology"/>
<comment type="function">
    <text evidence="1">Nucleoside triphosphate pyrophosphatase that hydrolyzes dTTP and UTP. May have a dual role in cell division arrest and in preventing the incorporation of modified nucleotides into cellular nucleic acids.</text>
</comment>
<comment type="catalytic activity">
    <reaction evidence="1">
        <text>dTTP + H2O = dTMP + diphosphate + H(+)</text>
        <dbReference type="Rhea" id="RHEA:28534"/>
        <dbReference type="ChEBI" id="CHEBI:15377"/>
        <dbReference type="ChEBI" id="CHEBI:15378"/>
        <dbReference type="ChEBI" id="CHEBI:33019"/>
        <dbReference type="ChEBI" id="CHEBI:37568"/>
        <dbReference type="ChEBI" id="CHEBI:63528"/>
        <dbReference type="EC" id="3.6.1.9"/>
    </reaction>
</comment>
<comment type="catalytic activity">
    <reaction evidence="1">
        <text>UTP + H2O = UMP + diphosphate + H(+)</text>
        <dbReference type="Rhea" id="RHEA:29395"/>
        <dbReference type="ChEBI" id="CHEBI:15377"/>
        <dbReference type="ChEBI" id="CHEBI:15378"/>
        <dbReference type="ChEBI" id="CHEBI:33019"/>
        <dbReference type="ChEBI" id="CHEBI:46398"/>
        <dbReference type="ChEBI" id="CHEBI:57865"/>
        <dbReference type="EC" id="3.6.1.9"/>
    </reaction>
</comment>
<comment type="cofactor">
    <cofactor evidence="1">
        <name>a divalent metal cation</name>
        <dbReference type="ChEBI" id="CHEBI:60240"/>
    </cofactor>
</comment>
<comment type="subcellular location">
    <subcellularLocation>
        <location evidence="1">Cytoplasm</location>
    </subcellularLocation>
</comment>
<comment type="similarity">
    <text evidence="1">Belongs to the Maf family. YhdE subfamily.</text>
</comment>
<gene>
    <name type="ordered locus">CPR_2112</name>
</gene>
<evidence type="ECO:0000255" key="1">
    <source>
        <dbReference type="HAMAP-Rule" id="MF_00528"/>
    </source>
</evidence>
<sequence length="192" mass="21550">MKVILASKSPRRVEILEKIVKEFEVVQSNFDENTIDFKGDVEKYVKDLSRNKAIEVSKRLNEPSIVIAADTVVFQNGKVLEKPKSEEDAFSMLSSLSGNTHKVYSGICLINTYDDTVVTDCDCTEVKFSELNPRQIRNYINSGEPMDKAGAYGIQGLGGAFVERIEGCYYNVMGLPLNKLYKALENYDITIL</sequence>
<protein>
    <recommendedName>
        <fullName evidence="1">dTTP/UTP pyrophosphatase</fullName>
        <shortName evidence="1">dTTPase/UTPase</shortName>
        <ecNumber evidence="1">3.6.1.9</ecNumber>
    </recommendedName>
    <alternativeName>
        <fullName evidence="1">Nucleoside triphosphate pyrophosphatase</fullName>
    </alternativeName>
    <alternativeName>
        <fullName evidence="1">Nucleotide pyrophosphatase</fullName>
        <shortName evidence="1">Nucleotide PPase</shortName>
    </alternativeName>
</protein>
<name>NTPPA_CLOPS</name>
<feature type="chain" id="PRO_0000267287" description="dTTP/UTP pyrophosphatase">
    <location>
        <begin position="1"/>
        <end position="192"/>
    </location>
</feature>
<feature type="active site" description="Proton acceptor" evidence="1">
    <location>
        <position position="70"/>
    </location>
</feature>
<feature type="site" description="Important for substrate specificity" evidence="1">
    <location>
        <position position="11"/>
    </location>
</feature>
<feature type="site" description="Important for substrate specificity" evidence="1">
    <location>
        <position position="71"/>
    </location>
</feature>
<feature type="site" description="Important for substrate specificity" evidence="1">
    <location>
        <position position="155"/>
    </location>
</feature>
<accession>Q0SR36</accession>
<reference key="1">
    <citation type="journal article" date="2006" name="Genome Res.">
        <title>Skewed genomic variability in strains of the toxigenic bacterial pathogen, Clostridium perfringens.</title>
        <authorList>
            <person name="Myers G.S.A."/>
            <person name="Rasko D.A."/>
            <person name="Cheung J.K."/>
            <person name="Ravel J."/>
            <person name="Seshadri R."/>
            <person name="DeBoy R.T."/>
            <person name="Ren Q."/>
            <person name="Varga J."/>
            <person name="Awad M.M."/>
            <person name="Brinkac L.M."/>
            <person name="Daugherty S.C."/>
            <person name="Haft D.H."/>
            <person name="Dodson R.J."/>
            <person name="Madupu R."/>
            <person name="Nelson W.C."/>
            <person name="Rosovitz M.J."/>
            <person name="Sullivan S.A."/>
            <person name="Khouri H."/>
            <person name="Dimitrov G.I."/>
            <person name="Watkins K.L."/>
            <person name="Mulligan S."/>
            <person name="Benton J."/>
            <person name="Radune D."/>
            <person name="Fisher D.J."/>
            <person name="Atkins H.S."/>
            <person name="Hiscox T."/>
            <person name="Jost B.H."/>
            <person name="Billington S.J."/>
            <person name="Songer J.G."/>
            <person name="McClane B.A."/>
            <person name="Titball R.W."/>
            <person name="Rood J.I."/>
            <person name="Melville S.B."/>
            <person name="Paulsen I.T."/>
        </authorList>
    </citation>
    <scope>NUCLEOTIDE SEQUENCE [LARGE SCALE GENOMIC DNA]</scope>
    <source>
        <strain>SM101 / Type A</strain>
    </source>
</reference>
<organism>
    <name type="scientific">Clostridium perfringens (strain SM101 / Type A)</name>
    <dbReference type="NCBI Taxonomy" id="289380"/>
    <lineage>
        <taxon>Bacteria</taxon>
        <taxon>Bacillati</taxon>
        <taxon>Bacillota</taxon>
        <taxon>Clostridia</taxon>
        <taxon>Eubacteriales</taxon>
        <taxon>Clostridiaceae</taxon>
        <taxon>Clostridium</taxon>
    </lineage>
</organism>